<comment type="similarity">
    <text evidence="1">Belongs to the UPF0178 family.</text>
</comment>
<organism>
    <name type="scientific">Bacillus cereus (strain AH820)</name>
    <dbReference type="NCBI Taxonomy" id="405535"/>
    <lineage>
        <taxon>Bacteria</taxon>
        <taxon>Bacillati</taxon>
        <taxon>Bacillota</taxon>
        <taxon>Bacilli</taxon>
        <taxon>Bacillales</taxon>
        <taxon>Bacillaceae</taxon>
        <taxon>Bacillus</taxon>
        <taxon>Bacillus cereus group</taxon>
    </lineage>
</organism>
<accession>B7JDA2</accession>
<protein>
    <recommendedName>
        <fullName evidence="1">UPF0178 protein BCAH820_3075</fullName>
    </recommendedName>
</protein>
<feature type="chain" id="PRO_1000126172" description="UPF0178 protein BCAH820_3075">
    <location>
        <begin position="1"/>
        <end position="146"/>
    </location>
</feature>
<gene>
    <name type="ordered locus">BCAH820_3075</name>
</gene>
<reference key="1">
    <citation type="submission" date="2008-10" db="EMBL/GenBank/DDBJ databases">
        <title>Genome sequence of Bacillus cereus AH820.</title>
        <authorList>
            <person name="Dodson R.J."/>
            <person name="Durkin A.S."/>
            <person name="Rosovitz M.J."/>
            <person name="Rasko D.A."/>
            <person name="Hoffmaster A."/>
            <person name="Ravel J."/>
            <person name="Sutton G."/>
        </authorList>
    </citation>
    <scope>NUCLEOTIDE SEQUENCE [LARGE SCALE GENOMIC DNA]</scope>
    <source>
        <strain>AH820</strain>
    </source>
</reference>
<proteinExistence type="inferred from homology"/>
<sequence>MKIYVDADACPVKDVIIFEATKAEIPVTLVTSFSHYSNAEQPKGVETIYVDSGADAADYRIMQLAQKEDLIVTQDYGLASLALAKGCIVLHHKGYKYTNENIEQLLQTRYLSAMVRKSGKRTKGPKPFTAEDKEKFRALFKSMIAL</sequence>
<name>Y3075_BACC0</name>
<dbReference type="EMBL" id="CP001283">
    <property type="protein sequence ID" value="ACK92359.1"/>
    <property type="molecule type" value="Genomic_DNA"/>
</dbReference>
<dbReference type="RefSeq" id="WP_000708756.1">
    <property type="nucleotide sequence ID" value="NC_011773.1"/>
</dbReference>
<dbReference type="KEGG" id="bcu:BCAH820_3075"/>
<dbReference type="HOGENOM" id="CLU_106619_0_0_9"/>
<dbReference type="Proteomes" id="UP000001363">
    <property type="component" value="Chromosome"/>
</dbReference>
<dbReference type="HAMAP" id="MF_00489">
    <property type="entry name" value="UPF0178"/>
    <property type="match status" value="1"/>
</dbReference>
<dbReference type="InterPro" id="IPR003791">
    <property type="entry name" value="UPF0178"/>
</dbReference>
<dbReference type="NCBIfam" id="NF001095">
    <property type="entry name" value="PRK00124.1"/>
    <property type="match status" value="1"/>
</dbReference>
<dbReference type="PANTHER" id="PTHR35146">
    <property type="entry name" value="UPF0178 PROTEIN YAII"/>
    <property type="match status" value="1"/>
</dbReference>
<dbReference type="PANTHER" id="PTHR35146:SF1">
    <property type="entry name" value="UPF0178 PROTEIN YAII"/>
    <property type="match status" value="1"/>
</dbReference>
<dbReference type="Pfam" id="PF02639">
    <property type="entry name" value="DUF188"/>
    <property type="match status" value="1"/>
</dbReference>
<evidence type="ECO:0000255" key="1">
    <source>
        <dbReference type="HAMAP-Rule" id="MF_00489"/>
    </source>
</evidence>